<organism>
    <name type="scientific">Xylella fastidiosa (strain Temecula1 / ATCC 700964)</name>
    <dbReference type="NCBI Taxonomy" id="183190"/>
    <lineage>
        <taxon>Bacteria</taxon>
        <taxon>Pseudomonadati</taxon>
        <taxon>Pseudomonadota</taxon>
        <taxon>Gammaproteobacteria</taxon>
        <taxon>Lysobacterales</taxon>
        <taxon>Lysobacteraceae</taxon>
        <taxon>Xylella</taxon>
    </lineage>
</organism>
<gene>
    <name evidence="1" type="primary">fabH</name>
    <name type="ordered locus">PD_1048</name>
</gene>
<accession>Q87CL7</accession>
<evidence type="ECO:0000255" key="1">
    <source>
        <dbReference type="HAMAP-Rule" id="MF_01815"/>
    </source>
</evidence>
<dbReference type="EC" id="2.3.1.180" evidence="1"/>
<dbReference type="EMBL" id="AE009442">
    <property type="protein sequence ID" value="AAO28908.1"/>
    <property type="molecule type" value="Genomic_DNA"/>
</dbReference>
<dbReference type="RefSeq" id="WP_011097914.1">
    <property type="nucleotide sequence ID" value="NC_004556.1"/>
</dbReference>
<dbReference type="SMR" id="Q87CL7"/>
<dbReference type="KEGG" id="xft:PD_1048"/>
<dbReference type="HOGENOM" id="CLU_039592_3_1_6"/>
<dbReference type="UniPathway" id="UPA00094"/>
<dbReference type="Proteomes" id="UP000002516">
    <property type="component" value="Chromosome"/>
</dbReference>
<dbReference type="GO" id="GO:0005737">
    <property type="term" value="C:cytoplasm"/>
    <property type="evidence" value="ECO:0007669"/>
    <property type="project" value="UniProtKB-SubCell"/>
</dbReference>
<dbReference type="GO" id="GO:0004315">
    <property type="term" value="F:3-oxoacyl-[acyl-carrier-protein] synthase activity"/>
    <property type="evidence" value="ECO:0007669"/>
    <property type="project" value="InterPro"/>
</dbReference>
<dbReference type="GO" id="GO:0033818">
    <property type="term" value="F:beta-ketoacyl-acyl-carrier-protein synthase III activity"/>
    <property type="evidence" value="ECO:0007669"/>
    <property type="project" value="UniProtKB-UniRule"/>
</dbReference>
<dbReference type="GO" id="GO:0006633">
    <property type="term" value="P:fatty acid biosynthetic process"/>
    <property type="evidence" value="ECO:0007669"/>
    <property type="project" value="UniProtKB-UniRule"/>
</dbReference>
<dbReference type="CDD" id="cd00830">
    <property type="entry name" value="KAS_III"/>
    <property type="match status" value="1"/>
</dbReference>
<dbReference type="FunFam" id="3.40.47.10:FF:000004">
    <property type="entry name" value="3-oxoacyl-[acyl-carrier-protein] synthase 3"/>
    <property type="match status" value="1"/>
</dbReference>
<dbReference type="Gene3D" id="3.40.47.10">
    <property type="match status" value="1"/>
</dbReference>
<dbReference type="HAMAP" id="MF_01815">
    <property type="entry name" value="FabH"/>
    <property type="match status" value="1"/>
</dbReference>
<dbReference type="InterPro" id="IPR013747">
    <property type="entry name" value="ACP_syn_III_C"/>
</dbReference>
<dbReference type="InterPro" id="IPR013751">
    <property type="entry name" value="ACP_syn_III_N"/>
</dbReference>
<dbReference type="InterPro" id="IPR004655">
    <property type="entry name" value="FabH"/>
</dbReference>
<dbReference type="InterPro" id="IPR016039">
    <property type="entry name" value="Thiolase-like"/>
</dbReference>
<dbReference type="NCBIfam" id="TIGR00747">
    <property type="entry name" value="fabH"/>
    <property type="match status" value="1"/>
</dbReference>
<dbReference type="NCBIfam" id="NF006829">
    <property type="entry name" value="PRK09352.1"/>
    <property type="match status" value="1"/>
</dbReference>
<dbReference type="PANTHER" id="PTHR43091">
    <property type="entry name" value="3-OXOACYL-[ACYL-CARRIER-PROTEIN] SYNTHASE"/>
    <property type="match status" value="1"/>
</dbReference>
<dbReference type="PANTHER" id="PTHR43091:SF1">
    <property type="entry name" value="BETA-KETOACYL-[ACYL-CARRIER-PROTEIN] SYNTHASE III, CHLOROPLASTIC"/>
    <property type="match status" value="1"/>
</dbReference>
<dbReference type="Pfam" id="PF08545">
    <property type="entry name" value="ACP_syn_III"/>
    <property type="match status" value="1"/>
</dbReference>
<dbReference type="Pfam" id="PF08541">
    <property type="entry name" value="ACP_syn_III_C"/>
    <property type="match status" value="1"/>
</dbReference>
<dbReference type="SUPFAM" id="SSF53901">
    <property type="entry name" value="Thiolase-like"/>
    <property type="match status" value="1"/>
</dbReference>
<reference key="1">
    <citation type="journal article" date="2003" name="J. Bacteriol.">
        <title>Comparative analyses of the complete genome sequences of Pierce's disease and citrus variegated chlorosis strains of Xylella fastidiosa.</title>
        <authorList>
            <person name="Van Sluys M.A."/>
            <person name="de Oliveira M.C."/>
            <person name="Monteiro-Vitorello C.B."/>
            <person name="Miyaki C.Y."/>
            <person name="Furlan L.R."/>
            <person name="Camargo L.E.A."/>
            <person name="da Silva A.C.R."/>
            <person name="Moon D.H."/>
            <person name="Takita M.A."/>
            <person name="Lemos E.G.M."/>
            <person name="Machado M.A."/>
            <person name="Ferro M.I.T."/>
            <person name="da Silva F.R."/>
            <person name="Goldman M.H.S."/>
            <person name="Goldman G.H."/>
            <person name="Lemos M.V.F."/>
            <person name="El-Dorry H."/>
            <person name="Tsai S.M."/>
            <person name="Carrer H."/>
            <person name="Carraro D.M."/>
            <person name="de Oliveira R.C."/>
            <person name="Nunes L.R."/>
            <person name="Siqueira W.J."/>
            <person name="Coutinho L.L."/>
            <person name="Kimura E.T."/>
            <person name="Ferro E.S."/>
            <person name="Harakava R."/>
            <person name="Kuramae E.E."/>
            <person name="Marino C.L."/>
            <person name="Giglioti E."/>
            <person name="Abreu I.L."/>
            <person name="Alves L.M.C."/>
            <person name="do Amaral A.M."/>
            <person name="Baia G.S."/>
            <person name="Blanco S.R."/>
            <person name="Brito M.S."/>
            <person name="Cannavan F.S."/>
            <person name="Celestino A.V."/>
            <person name="da Cunha A.F."/>
            <person name="Fenille R.C."/>
            <person name="Ferro J.A."/>
            <person name="Formighieri E.F."/>
            <person name="Kishi L.T."/>
            <person name="Leoni S.G."/>
            <person name="Oliveira A.R."/>
            <person name="Rosa V.E. Jr."/>
            <person name="Sassaki F.T."/>
            <person name="Sena J.A.D."/>
            <person name="de Souza A.A."/>
            <person name="Truffi D."/>
            <person name="Tsukumo F."/>
            <person name="Yanai G.M."/>
            <person name="Zaros L.G."/>
            <person name="Civerolo E.L."/>
            <person name="Simpson A.J.G."/>
            <person name="Almeida N.F. Jr."/>
            <person name="Setubal J.C."/>
            <person name="Kitajima J.P."/>
        </authorList>
    </citation>
    <scope>NUCLEOTIDE SEQUENCE [LARGE SCALE GENOMIC DNA]</scope>
    <source>
        <strain>Temecula1 / ATCC 700964</strain>
    </source>
</reference>
<comment type="function">
    <text evidence="1">Catalyzes the condensation reaction of fatty acid synthesis by the addition to an acyl acceptor of two carbons from malonyl-ACP. Catalyzes the first condensation reaction which initiates fatty acid synthesis and may therefore play a role in governing the total rate of fatty acid production. Possesses both acetoacetyl-ACP synthase and acetyl transacylase activities. Its substrate specificity determines the biosynthesis of branched-chain and/or straight-chain of fatty acids.</text>
</comment>
<comment type="catalytic activity">
    <reaction evidence="1">
        <text>malonyl-[ACP] + acetyl-CoA + H(+) = 3-oxobutanoyl-[ACP] + CO2 + CoA</text>
        <dbReference type="Rhea" id="RHEA:12080"/>
        <dbReference type="Rhea" id="RHEA-COMP:9623"/>
        <dbReference type="Rhea" id="RHEA-COMP:9625"/>
        <dbReference type="ChEBI" id="CHEBI:15378"/>
        <dbReference type="ChEBI" id="CHEBI:16526"/>
        <dbReference type="ChEBI" id="CHEBI:57287"/>
        <dbReference type="ChEBI" id="CHEBI:57288"/>
        <dbReference type="ChEBI" id="CHEBI:78449"/>
        <dbReference type="ChEBI" id="CHEBI:78450"/>
        <dbReference type="EC" id="2.3.1.180"/>
    </reaction>
</comment>
<comment type="pathway">
    <text evidence="1">Lipid metabolism; fatty acid biosynthesis.</text>
</comment>
<comment type="subunit">
    <text evidence="1">Homodimer.</text>
</comment>
<comment type="subcellular location">
    <subcellularLocation>
        <location evidence="1">Cytoplasm</location>
    </subcellularLocation>
</comment>
<comment type="domain">
    <text evidence="1">The last Arg residue of the ACP-binding site is essential for the weak association between ACP/AcpP and FabH.</text>
</comment>
<comment type="similarity">
    <text evidence="1">Belongs to the thiolase-like superfamily. FabH family.</text>
</comment>
<protein>
    <recommendedName>
        <fullName evidence="1">Beta-ketoacyl-[acyl-carrier-protein] synthase III</fullName>
        <shortName evidence="1">Beta-ketoacyl-ACP synthase III</shortName>
        <shortName evidence="1">KAS III</shortName>
        <ecNumber evidence="1">2.3.1.180</ecNumber>
    </recommendedName>
    <alternativeName>
        <fullName evidence="1">3-oxoacyl-[acyl-carrier-protein] synthase 3</fullName>
    </alternativeName>
    <alternativeName>
        <fullName evidence="1">3-oxoacyl-[acyl-carrier-protein] synthase III</fullName>
    </alternativeName>
</protein>
<sequence length="324" mass="34786">MSKRIFARIAGTGGYLPEKVLTNNDLAHIVDTSDEWIRTRTGIRERHIAAEGETTSDLAYEAAIRALEAAEVRSADLDLIVVGTTTPDLIFPSTACLLQARLGAVGCGAFDVNAACSGFVYALSVAEKFVSSGCSKTVLVVGADTLTRIIDWSDRTTCVLFGDGAGAVVLKADEDTGILSTHLHADGSKKELLWDPVGVSVGFGEGKDCGALLMKGNEVFKYAVKALDRVVDETLEANHLDKHELDWLIPHQANLRIIEATARRLDMSMNQVVVTVDRHGNTSTASVPLALDEAIRSGRVQRGQLLLLEAFGGGFTWGSALLRY</sequence>
<feature type="chain" id="PRO_0000110514" description="Beta-ketoacyl-[acyl-carrier-protein] synthase III">
    <location>
        <begin position="1"/>
        <end position="324"/>
    </location>
</feature>
<feature type="region of interest" description="ACP-binding" evidence="1">
    <location>
        <begin position="252"/>
        <end position="256"/>
    </location>
</feature>
<feature type="active site" evidence="1">
    <location>
        <position position="116"/>
    </location>
</feature>
<feature type="active site" evidence="1">
    <location>
        <position position="251"/>
    </location>
</feature>
<feature type="active site" evidence="1">
    <location>
        <position position="281"/>
    </location>
</feature>
<proteinExistence type="inferred from homology"/>
<keyword id="KW-0012">Acyltransferase</keyword>
<keyword id="KW-0963">Cytoplasm</keyword>
<keyword id="KW-0275">Fatty acid biosynthesis</keyword>
<keyword id="KW-0276">Fatty acid metabolism</keyword>
<keyword id="KW-0444">Lipid biosynthesis</keyword>
<keyword id="KW-0443">Lipid metabolism</keyword>
<keyword id="KW-0511">Multifunctional enzyme</keyword>
<keyword id="KW-1185">Reference proteome</keyword>
<keyword id="KW-0808">Transferase</keyword>
<name>FABH_XYLFT</name>